<proteinExistence type="inferred from homology"/>
<reference key="1">
    <citation type="journal article" date="2009" name="J. Bacteriol.">
        <title>Genome sequences of three Agrobacterium biovars help elucidate the evolution of multichromosome genomes in bacteria.</title>
        <authorList>
            <person name="Slater S.C."/>
            <person name="Goldman B.S."/>
            <person name="Goodner B."/>
            <person name="Setubal J.C."/>
            <person name="Farrand S.K."/>
            <person name="Nester E.W."/>
            <person name="Burr T.J."/>
            <person name="Banta L."/>
            <person name="Dickerman A.W."/>
            <person name="Paulsen I."/>
            <person name="Otten L."/>
            <person name="Suen G."/>
            <person name="Welch R."/>
            <person name="Almeida N.F."/>
            <person name="Arnold F."/>
            <person name="Burton O.T."/>
            <person name="Du Z."/>
            <person name="Ewing A."/>
            <person name="Godsy E."/>
            <person name="Heisel S."/>
            <person name="Houmiel K.L."/>
            <person name="Jhaveri J."/>
            <person name="Lu J."/>
            <person name="Miller N.M."/>
            <person name="Norton S."/>
            <person name="Chen Q."/>
            <person name="Phoolcharoen W."/>
            <person name="Ohlin V."/>
            <person name="Ondrusek D."/>
            <person name="Pride N."/>
            <person name="Stricklin S.L."/>
            <person name="Sun J."/>
            <person name="Wheeler C."/>
            <person name="Wilson L."/>
            <person name="Zhu H."/>
            <person name="Wood D.W."/>
        </authorList>
    </citation>
    <scope>NUCLEOTIDE SEQUENCE [LARGE SCALE GENOMIC DNA]</scope>
    <source>
        <strain>ATCC BAA-846 / DSM 112012 / S4</strain>
    </source>
</reference>
<name>BIOB_ALLAM</name>
<comment type="function">
    <text evidence="1">Catalyzes the conversion of dethiobiotin (DTB) to biotin by the insertion of a sulfur atom into dethiobiotin via a radical-based mechanism.</text>
</comment>
<comment type="catalytic activity">
    <reaction evidence="1">
        <text>(4R,5S)-dethiobiotin + (sulfur carrier)-SH + 2 reduced [2Fe-2S]-[ferredoxin] + 2 S-adenosyl-L-methionine = (sulfur carrier)-H + biotin + 2 5'-deoxyadenosine + 2 L-methionine + 2 oxidized [2Fe-2S]-[ferredoxin]</text>
        <dbReference type="Rhea" id="RHEA:22060"/>
        <dbReference type="Rhea" id="RHEA-COMP:10000"/>
        <dbReference type="Rhea" id="RHEA-COMP:10001"/>
        <dbReference type="Rhea" id="RHEA-COMP:14737"/>
        <dbReference type="Rhea" id="RHEA-COMP:14739"/>
        <dbReference type="ChEBI" id="CHEBI:17319"/>
        <dbReference type="ChEBI" id="CHEBI:29917"/>
        <dbReference type="ChEBI" id="CHEBI:33737"/>
        <dbReference type="ChEBI" id="CHEBI:33738"/>
        <dbReference type="ChEBI" id="CHEBI:57586"/>
        <dbReference type="ChEBI" id="CHEBI:57844"/>
        <dbReference type="ChEBI" id="CHEBI:59789"/>
        <dbReference type="ChEBI" id="CHEBI:64428"/>
        <dbReference type="ChEBI" id="CHEBI:149473"/>
        <dbReference type="EC" id="2.8.1.6"/>
    </reaction>
</comment>
<comment type="cofactor">
    <cofactor evidence="1">
        <name>[4Fe-4S] cluster</name>
        <dbReference type="ChEBI" id="CHEBI:49883"/>
    </cofactor>
    <text evidence="1">Binds 1 [4Fe-4S] cluster. The cluster is coordinated with 3 cysteines and an exchangeable S-adenosyl-L-methionine.</text>
</comment>
<comment type="cofactor">
    <cofactor evidence="1">
        <name>[2Fe-2S] cluster</name>
        <dbReference type="ChEBI" id="CHEBI:190135"/>
    </cofactor>
    <text evidence="1">Binds 1 [2Fe-2S] cluster. The cluster is coordinated with 3 cysteines and 1 arginine.</text>
</comment>
<comment type="pathway">
    <text evidence="1">Cofactor biosynthesis; biotin biosynthesis; biotin from 7,8-diaminononanoate: step 2/2.</text>
</comment>
<comment type="subunit">
    <text evidence="1">Homodimer.</text>
</comment>
<comment type="similarity">
    <text evidence="1">Belongs to the radical SAM superfamily. Biotin synthase family.</text>
</comment>
<sequence length="328" mass="35435">MSEAAGEIRNDWSVEEIVTLHNLPLLELIGHANAVHGRHHNPNVVQKASLLSIKTGGCPEDCAYCPQSAHHREVKLTKDRLMQPETVLALAKRAKDAGAERFCMGAAWRQVRDGKEFDAVLTMVRGVRDLGMEACVTLGMLEKHQAEKLAEAGLTAYNHNLDTSPEFYGEIITTRSYADRLETLSIVRSFGIDLCCGGIIGMGETIRDRASMLQVLASMRPHPESVPINALVPVEGTPLAAMPRIDPLELVRMVATARIVMPKSTVRLSAGRSTLNREAQILCLVSGANSVFYGDTLLTTPNAGIGEDEALFAAIGALPHEAAPLAAE</sequence>
<dbReference type="EC" id="2.8.1.6" evidence="1"/>
<dbReference type="EMBL" id="CP000633">
    <property type="protein sequence ID" value="ACM37232.1"/>
    <property type="molecule type" value="Genomic_DNA"/>
</dbReference>
<dbReference type="RefSeq" id="WP_015916651.1">
    <property type="nucleotide sequence ID" value="NC_011989.1"/>
</dbReference>
<dbReference type="SMR" id="B9JYY6"/>
<dbReference type="STRING" id="311402.Avi_3108"/>
<dbReference type="KEGG" id="avi:Avi_3108"/>
<dbReference type="eggNOG" id="COG0502">
    <property type="taxonomic scope" value="Bacteria"/>
</dbReference>
<dbReference type="HOGENOM" id="CLU_033172_1_2_5"/>
<dbReference type="UniPathway" id="UPA00078">
    <property type="reaction ID" value="UER00162"/>
</dbReference>
<dbReference type="Proteomes" id="UP000001596">
    <property type="component" value="Chromosome 1"/>
</dbReference>
<dbReference type="GO" id="GO:0051537">
    <property type="term" value="F:2 iron, 2 sulfur cluster binding"/>
    <property type="evidence" value="ECO:0007669"/>
    <property type="project" value="UniProtKB-KW"/>
</dbReference>
<dbReference type="GO" id="GO:0051539">
    <property type="term" value="F:4 iron, 4 sulfur cluster binding"/>
    <property type="evidence" value="ECO:0007669"/>
    <property type="project" value="UniProtKB-KW"/>
</dbReference>
<dbReference type="GO" id="GO:0004076">
    <property type="term" value="F:biotin synthase activity"/>
    <property type="evidence" value="ECO:0007669"/>
    <property type="project" value="UniProtKB-UniRule"/>
</dbReference>
<dbReference type="GO" id="GO:0005506">
    <property type="term" value="F:iron ion binding"/>
    <property type="evidence" value="ECO:0007669"/>
    <property type="project" value="UniProtKB-UniRule"/>
</dbReference>
<dbReference type="GO" id="GO:0009102">
    <property type="term" value="P:biotin biosynthetic process"/>
    <property type="evidence" value="ECO:0007669"/>
    <property type="project" value="UniProtKB-UniRule"/>
</dbReference>
<dbReference type="CDD" id="cd01335">
    <property type="entry name" value="Radical_SAM"/>
    <property type="match status" value="1"/>
</dbReference>
<dbReference type="Gene3D" id="3.20.20.70">
    <property type="entry name" value="Aldolase class I"/>
    <property type="match status" value="1"/>
</dbReference>
<dbReference type="HAMAP" id="MF_01694">
    <property type="entry name" value="BioB"/>
    <property type="match status" value="1"/>
</dbReference>
<dbReference type="InterPro" id="IPR013785">
    <property type="entry name" value="Aldolase_TIM"/>
</dbReference>
<dbReference type="InterPro" id="IPR010722">
    <property type="entry name" value="BATS_dom"/>
</dbReference>
<dbReference type="InterPro" id="IPR002684">
    <property type="entry name" value="Biotin_synth/BioAB"/>
</dbReference>
<dbReference type="InterPro" id="IPR024177">
    <property type="entry name" value="Biotin_synthase"/>
</dbReference>
<dbReference type="InterPro" id="IPR006638">
    <property type="entry name" value="Elp3/MiaA/NifB-like_rSAM"/>
</dbReference>
<dbReference type="InterPro" id="IPR007197">
    <property type="entry name" value="rSAM"/>
</dbReference>
<dbReference type="NCBIfam" id="TIGR00433">
    <property type="entry name" value="bioB"/>
    <property type="match status" value="1"/>
</dbReference>
<dbReference type="PANTHER" id="PTHR22976">
    <property type="entry name" value="BIOTIN SYNTHASE"/>
    <property type="match status" value="1"/>
</dbReference>
<dbReference type="PANTHER" id="PTHR22976:SF2">
    <property type="entry name" value="BIOTIN SYNTHASE, MITOCHONDRIAL"/>
    <property type="match status" value="1"/>
</dbReference>
<dbReference type="Pfam" id="PF06968">
    <property type="entry name" value="BATS"/>
    <property type="match status" value="1"/>
</dbReference>
<dbReference type="Pfam" id="PF04055">
    <property type="entry name" value="Radical_SAM"/>
    <property type="match status" value="1"/>
</dbReference>
<dbReference type="PIRSF" id="PIRSF001619">
    <property type="entry name" value="Biotin_synth"/>
    <property type="match status" value="1"/>
</dbReference>
<dbReference type="SFLD" id="SFLDF00272">
    <property type="entry name" value="biotin_synthase"/>
    <property type="match status" value="1"/>
</dbReference>
<dbReference type="SFLD" id="SFLDS00029">
    <property type="entry name" value="Radical_SAM"/>
    <property type="match status" value="1"/>
</dbReference>
<dbReference type="SMART" id="SM00876">
    <property type="entry name" value="BATS"/>
    <property type="match status" value="1"/>
</dbReference>
<dbReference type="SMART" id="SM00729">
    <property type="entry name" value="Elp3"/>
    <property type="match status" value="1"/>
</dbReference>
<dbReference type="SUPFAM" id="SSF102114">
    <property type="entry name" value="Radical SAM enzymes"/>
    <property type="match status" value="1"/>
</dbReference>
<dbReference type="PROSITE" id="PS51918">
    <property type="entry name" value="RADICAL_SAM"/>
    <property type="match status" value="1"/>
</dbReference>
<organism>
    <name type="scientific">Allorhizobium ampelinum (strain ATCC BAA-846 / DSM 112012 / S4)</name>
    <name type="common">Agrobacterium vitis (strain S4)</name>
    <dbReference type="NCBI Taxonomy" id="311402"/>
    <lineage>
        <taxon>Bacteria</taxon>
        <taxon>Pseudomonadati</taxon>
        <taxon>Pseudomonadota</taxon>
        <taxon>Alphaproteobacteria</taxon>
        <taxon>Hyphomicrobiales</taxon>
        <taxon>Rhizobiaceae</taxon>
        <taxon>Rhizobium/Agrobacterium group</taxon>
        <taxon>Allorhizobium</taxon>
        <taxon>Allorhizobium ampelinum</taxon>
    </lineage>
</organism>
<keyword id="KW-0001">2Fe-2S</keyword>
<keyword id="KW-0004">4Fe-4S</keyword>
<keyword id="KW-0093">Biotin biosynthesis</keyword>
<keyword id="KW-0408">Iron</keyword>
<keyword id="KW-0411">Iron-sulfur</keyword>
<keyword id="KW-0479">Metal-binding</keyword>
<keyword id="KW-1185">Reference proteome</keyword>
<keyword id="KW-0949">S-adenosyl-L-methionine</keyword>
<keyword id="KW-0808">Transferase</keyword>
<accession>B9JYY6</accession>
<protein>
    <recommendedName>
        <fullName evidence="1">Biotin synthase</fullName>
        <ecNumber evidence="1">2.8.1.6</ecNumber>
    </recommendedName>
</protein>
<feature type="chain" id="PRO_0000381188" description="Biotin synthase">
    <location>
        <begin position="1"/>
        <end position="328"/>
    </location>
</feature>
<feature type="domain" description="Radical SAM core" evidence="2">
    <location>
        <begin position="43"/>
        <end position="272"/>
    </location>
</feature>
<feature type="binding site" evidence="1">
    <location>
        <position position="58"/>
    </location>
    <ligand>
        <name>[4Fe-4S] cluster</name>
        <dbReference type="ChEBI" id="CHEBI:49883"/>
        <note>4Fe-4S-S-AdoMet</note>
    </ligand>
</feature>
<feature type="binding site" evidence="1">
    <location>
        <position position="62"/>
    </location>
    <ligand>
        <name>[4Fe-4S] cluster</name>
        <dbReference type="ChEBI" id="CHEBI:49883"/>
        <note>4Fe-4S-S-AdoMet</note>
    </ligand>
</feature>
<feature type="binding site" evidence="1">
    <location>
        <position position="65"/>
    </location>
    <ligand>
        <name>[4Fe-4S] cluster</name>
        <dbReference type="ChEBI" id="CHEBI:49883"/>
        <note>4Fe-4S-S-AdoMet</note>
    </ligand>
</feature>
<feature type="binding site" evidence="1">
    <location>
        <position position="103"/>
    </location>
    <ligand>
        <name>[2Fe-2S] cluster</name>
        <dbReference type="ChEBI" id="CHEBI:190135"/>
    </ligand>
</feature>
<feature type="binding site" evidence="1">
    <location>
        <position position="135"/>
    </location>
    <ligand>
        <name>[2Fe-2S] cluster</name>
        <dbReference type="ChEBI" id="CHEBI:190135"/>
    </ligand>
</feature>
<feature type="binding site" evidence="1">
    <location>
        <position position="195"/>
    </location>
    <ligand>
        <name>[2Fe-2S] cluster</name>
        <dbReference type="ChEBI" id="CHEBI:190135"/>
    </ligand>
</feature>
<feature type="binding site" evidence="1">
    <location>
        <position position="267"/>
    </location>
    <ligand>
        <name>[2Fe-2S] cluster</name>
        <dbReference type="ChEBI" id="CHEBI:190135"/>
    </ligand>
</feature>
<evidence type="ECO:0000255" key="1">
    <source>
        <dbReference type="HAMAP-Rule" id="MF_01694"/>
    </source>
</evidence>
<evidence type="ECO:0000255" key="2">
    <source>
        <dbReference type="PROSITE-ProRule" id="PRU01266"/>
    </source>
</evidence>
<gene>
    <name evidence="1" type="primary">bioB</name>
    <name type="ordered locus">Avi_3108</name>
</gene>